<feature type="chain" id="PRO_0000277632" description="GPI inositol-deacylase">
    <location>
        <begin position="1"/>
        <end position="390"/>
    </location>
</feature>
<feature type="transmembrane region" description="Helical" evidence="2">
    <location>
        <begin position="21"/>
        <end position="41"/>
    </location>
</feature>
<feature type="transmembrane region" description="Helical" evidence="2">
    <location>
        <begin position="354"/>
        <end position="374"/>
    </location>
</feature>
<feature type="active site" evidence="1">
    <location>
        <position position="202"/>
    </location>
</feature>
<dbReference type="EC" id="3.1.-.-"/>
<dbReference type="EMBL" id="CP017623">
    <property type="protein sequence ID" value="AOW26094.1"/>
    <property type="molecule type" value="Genomic_DNA"/>
</dbReference>
<dbReference type="RefSeq" id="XP_713657.2">
    <property type="nucleotide sequence ID" value="XM_708564.2"/>
</dbReference>
<dbReference type="SMR" id="Q59VP0"/>
<dbReference type="STRING" id="237561.Q59VP0"/>
<dbReference type="ESTHER" id="canal-q59vp0">
    <property type="family name" value="PGAP1"/>
</dbReference>
<dbReference type="EnsemblFungi" id="C1_04190C_A-T">
    <property type="protein sequence ID" value="C1_04190C_A-T-p1"/>
    <property type="gene ID" value="C1_04190C_A"/>
</dbReference>
<dbReference type="GeneID" id="3644717"/>
<dbReference type="KEGG" id="cal:CAALFM_C104190CA"/>
<dbReference type="CGD" id="CAL0000175277">
    <property type="gene designation" value="BST1"/>
</dbReference>
<dbReference type="VEuPathDB" id="FungiDB:C1_04190C_A"/>
<dbReference type="eggNOG" id="KOG3724">
    <property type="taxonomic scope" value="Eukaryota"/>
</dbReference>
<dbReference type="HOGENOM" id="CLU_058462_0_0_1"/>
<dbReference type="InParanoid" id="Q59VP0"/>
<dbReference type="OMA" id="DQVEYVT"/>
<dbReference type="OrthoDB" id="348976at2759"/>
<dbReference type="PRO" id="PR:Q59VP0"/>
<dbReference type="Proteomes" id="UP000000559">
    <property type="component" value="Chromosome 1"/>
</dbReference>
<dbReference type="GO" id="GO:0005789">
    <property type="term" value="C:endoplasmic reticulum membrane"/>
    <property type="evidence" value="ECO:0007669"/>
    <property type="project" value="UniProtKB-SubCell"/>
</dbReference>
<dbReference type="GO" id="GO:0050185">
    <property type="term" value="F:phosphatidylinositol deacylase activity"/>
    <property type="evidence" value="ECO:0000315"/>
    <property type="project" value="CGD"/>
</dbReference>
<dbReference type="GO" id="GO:0009272">
    <property type="term" value="P:fungal-type cell wall biogenesis"/>
    <property type="evidence" value="ECO:0000315"/>
    <property type="project" value="CGD"/>
</dbReference>
<dbReference type="GO" id="GO:0006505">
    <property type="term" value="P:GPI anchor metabolic process"/>
    <property type="evidence" value="ECO:0000315"/>
    <property type="project" value="CGD"/>
</dbReference>
<dbReference type="GO" id="GO:0015031">
    <property type="term" value="P:protein transport"/>
    <property type="evidence" value="ECO:0007669"/>
    <property type="project" value="UniProtKB-KW"/>
</dbReference>
<dbReference type="GO" id="GO:0042783">
    <property type="term" value="P:symbiont-mediated evasion of host immune response"/>
    <property type="evidence" value="ECO:0000315"/>
    <property type="project" value="CGD"/>
</dbReference>
<dbReference type="Gene3D" id="3.40.50.1820">
    <property type="entry name" value="alpha/beta hydrolase"/>
    <property type="match status" value="1"/>
</dbReference>
<dbReference type="InterPro" id="IPR029058">
    <property type="entry name" value="AB_hydrolase_fold"/>
</dbReference>
<dbReference type="InterPro" id="IPR012908">
    <property type="entry name" value="PGAP1-ab_dom-like"/>
</dbReference>
<dbReference type="InterPro" id="IPR039529">
    <property type="entry name" value="PGAP1/BST1"/>
</dbReference>
<dbReference type="PANTHER" id="PTHR15495:SF7">
    <property type="entry name" value="GPI INOSITOL-DEACYLASE"/>
    <property type="match status" value="1"/>
</dbReference>
<dbReference type="PANTHER" id="PTHR15495">
    <property type="entry name" value="NEGATIVE REGULATOR OF VESICLE FORMATION-RELATED"/>
    <property type="match status" value="1"/>
</dbReference>
<dbReference type="Pfam" id="PF07819">
    <property type="entry name" value="PGAP1"/>
    <property type="match status" value="1"/>
</dbReference>
<dbReference type="SUPFAM" id="SSF53474">
    <property type="entry name" value="alpha/beta-Hydrolases"/>
    <property type="match status" value="1"/>
</dbReference>
<dbReference type="PROSITE" id="PS00120">
    <property type="entry name" value="LIPASE_SER"/>
    <property type="match status" value="1"/>
</dbReference>
<protein>
    <recommendedName>
        <fullName>GPI inositol-deacylase</fullName>
        <ecNumber>3.1.-.-</ecNumber>
    </recommendedName>
</protein>
<organism>
    <name type="scientific">Candida albicans (strain SC5314 / ATCC MYA-2876)</name>
    <name type="common">Yeast</name>
    <dbReference type="NCBI Taxonomy" id="237561"/>
    <lineage>
        <taxon>Eukaryota</taxon>
        <taxon>Fungi</taxon>
        <taxon>Dikarya</taxon>
        <taxon>Ascomycota</taxon>
        <taxon>Saccharomycotina</taxon>
        <taxon>Pichiomycetes</taxon>
        <taxon>Debaryomycetaceae</taxon>
        <taxon>Candida/Lodderomyces clade</taxon>
        <taxon>Candida</taxon>
    </lineage>
</organism>
<keyword id="KW-0256">Endoplasmic reticulum</keyword>
<keyword id="KW-0378">Hydrolase</keyword>
<keyword id="KW-0472">Membrane</keyword>
<keyword id="KW-0653">Protein transport</keyword>
<keyword id="KW-1185">Reference proteome</keyword>
<keyword id="KW-0812">Transmembrane</keyword>
<keyword id="KW-1133">Transmembrane helix</keyword>
<keyword id="KW-0813">Transport</keyword>
<sequence>MLSKRLFPYSNLFPRSRKYKFIVYFIICLTIIISALGVYLYSIPIVSPNQPQCDMVWMSPSYARIRAFDETHTKYASKYNLYLYREQDVDKMPNENENEDGNEGFTSLDGIPALFIHGNAGSFEQVRSIAARCSEMYYNDGRFKEKYPHARNIDFFTADFNEELSAFKGLRDQVEYVTQAISFIVDLYPQNPNRNIILIGHSMGGLVARIAASRQQHESNVDIILTLATPHSDPFPWLPKTSDFPDEVGLISIYSSVDLMVPPSVVTPKSKSDHFFSVDAAKLLGVPIDHQGIVWCGQLREKLSEALIGISGLNTLQDRMKVFKKIFSGDRKELGPTPIFGLAKLKLKLLQSWVHLLSLTIFALKWTIIVLAIIQLRKVYTKFNNPPPTH</sequence>
<name>BST1_CANAL</name>
<comment type="function">
    <text evidence="1">Involved in inositol deacylation of GPI-anchored proteins which plays important roles in the quality control and ER-associated degradation of GPI-anchored proteins.</text>
</comment>
<comment type="subcellular location">
    <subcellularLocation>
        <location evidence="1">Endoplasmic reticulum membrane</location>
        <topology evidence="1">Multi-pass membrane protein</topology>
    </subcellularLocation>
</comment>
<comment type="miscellaneous">
    <text>Lacks the C-terminal half of the classical GPI inositol-deacylases.</text>
</comment>
<comment type="similarity">
    <text evidence="3">Belongs to the GPI inositol-deacylase family.</text>
</comment>
<gene>
    <name type="primary">BST1</name>
    <name type="ordered locus">CAALFM_C104190CA</name>
    <name type="ORF">CaO19.1053</name>
    <name type="ORF">CaO19.8655</name>
</gene>
<evidence type="ECO:0000250" key="1"/>
<evidence type="ECO:0000255" key="2"/>
<evidence type="ECO:0000305" key="3"/>
<proteinExistence type="inferred from homology"/>
<reference key="1">
    <citation type="journal article" date="2004" name="Proc. Natl. Acad. Sci. U.S.A.">
        <title>The diploid genome sequence of Candida albicans.</title>
        <authorList>
            <person name="Jones T."/>
            <person name="Federspiel N.A."/>
            <person name="Chibana H."/>
            <person name="Dungan J."/>
            <person name="Kalman S."/>
            <person name="Magee B.B."/>
            <person name="Newport G."/>
            <person name="Thorstenson Y.R."/>
            <person name="Agabian N."/>
            <person name="Magee P.T."/>
            <person name="Davis R.W."/>
            <person name="Scherer S."/>
        </authorList>
    </citation>
    <scope>NUCLEOTIDE SEQUENCE [LARGE SCALE GENOMIC DNA]</scope>
    <source>
        <strain>SC5314 / ATCC MYA-2876</strain>
    </source>
</reference>
<reference key="2">
    <citation type="journal article" date="2007" name="Genome Biol.">
        <title>Assembly of the Candida albicans genome into sixteen supercontigs aligned on the eight chromosomes.</title>
        <authorList>
            <person name="van het Hoog M."/>
            <person name="Rast T.J."/>
            <person name="Martchenko M."/>
            <person name="Grindle S."/>
            <person name="Dignard D."/>
            <person name="Hogues H."/>
            <person name="Cuomo C."/>
            <person name="Berriman M."/>
            <person name="Scherer S."/>
            <person name="Magee B.B."/>
            <person name="Whiteway M."/>
            <person name="Chibana H."/>
            <person name="Nantel A."/>
            <person name="Magee P.T."/>
        </authorList>
    </citation>
    <scope>GENOME REANNOTATION</scope>
    <source>
        <strain>SC5314 / ATCC MYA-2876</strain>
    </source>
</reference>
<reference key="3">
    <citation type="journal article" date="2013" name="Genome Biol.">
        <title>Assembly of a phased diploid Candida albicans genome facilitates allele-specific measurements and provides a simple model for repeat and indel structure.</title>
        <authorList>
            <person name="Muzzey D."/>
            <person name="Schwartz K."/>
            <person name="Weissman J.S."/>
            <person name="Sherlock G."/>
        </authorList>
    </citation>
    <scope>NUCLEOTIDE SEQUENCE [LARGE SCALE GENOMIC DNA]</scope>
    <scope>GENOME REANNOTATION</scope>
    <source>
        <strain>SC5314 / ATCC MYA-2876</strain>
    </source>
</reference>
<accession>Q59VP0</accession>
<accession>A0A1D8PD71</accession>